<sequence>MTSDVLQLTCDLIARASVTPADAGCQALIADRLSAAGFACEHLRLGAVDNLWATHGSGAPVLVLLGHTDVVPPGPASDWASDPFAPQVRDGVLYGRGAADMKGSVAAFVVAAEQFVAAHPEHPGTLAVLLTSDEEGDAIDGVRHVARLFAERGQQIDWCITGEPSSTERLGDLLRVGRRGSLSGNLIVKGVQGHVAYPHKARNPIHLAAPALAELIARQWDDGFESFPPTSLQISNIHAGTGANNVIPGELQVAFNLRYTPHWNAETLEREIVALLERHALTYTLAWHRSGEPFYTPEGTLRRVAREVLGAFAGAPPEESTGGGTSDARFIAPLGAQCIEVGPVNASIHQVDEHVRVADLEALPALYRTLVERLLV</sequence>
<comment type="function">
    <text evidence="1">Catalyzes the hydrolysis of N-succinyl-L,L-diaminopimelic acid (SDAP), forming succinate and LL-2,6-diaminopimelate (DAP), an intermediate involved in the bacterial biosynthesis of lysine and meso-diaminopimelic acid, an essential component of bacterial cell walls.</text>
</comment>
<comment type="catalytic activity">
    <reaction evidence="1">
        <text>N-succinyl-(2S,6S)-2,6-diaminopimelate + H2O = (2S,6S)-2,6-diaminopimelate + succinate</text>
        <dbReference type="Rhea" id="RHEA:22608"/>
        <dbReference type="ChEBI" id="CHEBI:15377"/>
        <dbReference type="ChEBI" id="CHEBI:30031"/>
        <dbReference type="ChEBI" id="CHEBI:57609"/>
        <dbReference type="ChEBI" id="CHEBI:58087"/>
        <dbReference type="EC" id="3.5.1.18"/>
    </reaction>
</comment>
<comment type="cofactor">
    <cofactor evidence="1">
        <name>Zn(2+)</name>
        <dbReference type="ChEBI" id="CHEBI:29105"/>
    </cofactor>
    <cofactor evidence="1">
        <name>Co(2+)</name>
        <dbReference type="ChEBI" id="CHEBI:48828"/>
    </cofactor>
    <text evidence="1">Binds 2 Zn(2+) or Co(2+) ions per subunit.</text>
</comment>
<comment type="pathway">
    <text evidence="1">Amino-acid biosynthesis; L-lysine biosynthesis via DAP pathway; LL-2,6-diaminopimelate from (S)-tetrahydrodipicolinate (succinylase route): step 3/3.</text>
</comment>
<comment type="subunit">
    <text evidence="1">Homodimer.</text>
</comment>
<comment type="similarity">
    <text evidence="1">Belongs to the peptidase M20A family. DapE subfamily.</text>
</comment>
<protein>
    <recommendedName>
        <fullName evidence="1">Succinyl-diaminopimelate desuccinylase</fullName>
        <shortName evidence="1">SDAP desuccinylase</shortName>
        <ecNumber evidence="1">3.5.1.18</ecNumber>
    </recommendedName>
    <alternativeName>
        <fullName evidence="1">N-succinyl-LL-2,6-diaminoheptanedioate amidohydrolase</fullName>
    </alternativeName>
</protein>
<dbReference type="EC" id="3.5.1.18" evidence="1"/>
<dbReference type="EMBL" id="AM920689">
    <property type="protein sequence ID" value="CAP52271.1"/>
    <property type="molecule type" value="Genomic_DNA"/>
</dbReference>
<dbReference type="SMR" id="B0RW53"/>
<dbReference type="KEGG" id="xca:xcc-b100_2910"/>
<dbReference type="HOGENOM" id="CLU_021802_4_0_6"/>
<dbReference type="UniPathway" id="UPA00034">
    <property type="reaction ID" value="UER00021"/>
</dbReference>
<dbReference type="Proteomes" id="UP000001188">
    <property type="component" value="Chromosome"/>
</dbReference>
<dbReference type="GO" id="GO:0008777">
    <property type="term" value="F:acetylornithine deacetylase activity"/>
    <property type="evidence" value="ECO:0007669"/>
    <property type="project" value="TreeGrafter"/>
</dbReference>
<dbReference type="GO" id="GO:0050897">
    <property type="term" value="F:cobalt ion binding"/>
    <property type="evidence" value="ECO:0007669"/>
    <property type="project" value="UniProtKB-UniRule"/>
</dbReference>
<dbReference type="GO" id="GO:0009014">
    <property type="term" value="F:succinyl-diaminopimelate desuccinylase activity"/>
    <property type="evidence" value="ECO:0007669"/>
    <property type="project" value="UniProtKB-UniRule"/>
</dbReference>
<dbReference type="GO" id="GO:0008270">
    <property type="term" value="F:zinc ion binding"/>
    <property type="evidence" value="ECO:0007669"/>
    <property type="project" value="UniProtKB-UniRule"/>
</dbReference>
<dbReference type="GO" id="GO:0019877">
    <property type="term" value="P:diaminopimelate biosynthetic process"/>
    <property type="evidence" value="ECO:0007669"/>
    <property type="project" value="UniProtKB-UniRule"/>
</dbReference>
<dbReference type="GO" id="GO:0006526">
    <property type="term" value="P:L-arginine biosynthetic process"/>
    <property type="evidence" value="ECO:0007669"/>
    <property type="project" value="TreeGrafter"/>
</dbReference>
<dbReference type="GO" id="GO:0009089">
    <property type="term" value="P:lysine biosynthetic process via diaminopimelate"/>
    <property type="evidence" value="ECO:0007669"/>
    <property type="project" value="UniProtKB-UniRule"/>
</dbReference>
<dbReference type="CDD" id="cd03891">
    <property type="entry name" value="M20_DapE_proteobac"/>
    <property type="match status" value="1"/>
</dbReference>
<dbReference type="FunFam" id="3.40.630.10:FF:000005">
    <property type="entry name" value="Succinyl-diaminopimelate desuccinylase"/>
    <property type="match status" value="1"/>
</dbReference>
<dbReference type="Gene3D" id="3.40.630.10">
    <property type="entry name" value="Zn peptidases"/>
    <property type="match status" value="2"/>
</dbReference>
<dbReference type="HAMAP" id="MF_01690">
    <property type="entry name" value="DapE"/>
    <property type="match status" value="1"/>
</dbReference>
<dbReference type="InterPro" id="IPR001261">
    <property type="entry name" value="ArgE/DapE_CS"/>
</dbReference>
<dbReference type="InterPro" id="IPR036264">
    <property type="entry name" value="Bact_exopeptidase_dim_dom"/>
</dbReference>
<dbReference type="InterPro" id="IPR005941">
    <property type="entry name" value="DapE_proteobac"/>
</dbReference>
<dbReference type="InterPro" id="IPR002933">
    <property type="entry name" value="Peptidase_M20"/>
</dbReference>
<dbReference type="InterPro" id="IPR011650">
    <property type="entry name" value="Peptidase_M20_dimer"/>
</dbReference>
<dbReference type="InterPro" id="IPR050072">
    <property type="entry name" value="Peptidase_M20A"/>
</dbReference>
<dbReference type="NCBIfam" id="TIGR01246">
    <property type="entry name" value="dapE_proteo"/>
    <property type="match status" value="1"/>
</dbReference>
<dbReference type="NCBIfam" id="NF009557">
    <property type="entry name" value="PRK13009.1"/>
    <property type="match status" value="1"/>
</dbReference>
<dbReference type="PANTHER" id="PTHR43808">
    <property type="entry name" value="ACETYLORNITHINE DEACETYLASE"/>
    <property type="match status" value="1"/>
</dbReference>
<dbReference type="PANTHER" id="PTHR43808:SF31">
    <property type="entry name" value="N-ACETYL-L-CITRULLINE DEACETYLASE"/>
    <property type="match status" value="1"/>
</dbReference>
<dbReference type="Pfam" id="PF07687">
    <property type="entry name" value="M20_dimer"/>
    <property type="match status" value="1"/>
</dbReference>
<dbReference type="Pfam" id="PF01546">
    <property type="entry name" value="Peptidase_M20"/>
    <property type="match status" value="1"/>
</dbReference>
<dbReference type="SUPFAM" id="SSF55031">
    <property type="entry name" value="Bacterial exopeptidase dimerisation domain"/>
    <property type="match status" value="1"/>
</dbReference>
<dbReference type="SUPFAM" id="SSF53187">
    <property type="entry name" value="Zn-dependent exopeptidases"/>
    <property type="match status" value="1"/>
</dbReference>
<dbReference type="PROSITE" id="PS00759">
    <property type="entry name" value="ARGE_DAPE_CPG2_2"/>
    <property type="match status" value="1"/>
</dbReference>
<feature type="chain" id="PRO_0000375784" description="Succinyl-diaminopimelate desuccinylase">
    <location>
        <begin position="1"/>
        <end position="376"/>
    </location>
</feature>
<feature type="active site" evidence="1">
    <location>
        <position position="69"/>
    </location>
</feature>
<feature type="active site" description="Proton acceptor" evidence="1">
    <location>
        <position position="134"/>
    </location>
</feature>
<feature type="binding site" evidence="1">
    <location>
        <position position="67"/>
    </location>
    <ligand>
        <name>Zn(2+)</name>
        <dbReference type="ChEBI" id="CHEBI:29105"/>
        <label>1</label>
    </ligand>
</feature>
<feature type="binding site" evidence="1">
    <location>
        <position position="100"/>
    </location>
    <ligand>
        <name>Zn(2+)</name>
        <dbReference type="ChEBI" id="CHEBI:29105"/>
        <label>1</label>
    </ligand>
</feature>
<feature type="binding site" evidence="1">
    <location>
        <position position="100"/>
    </location>
    <ligand>
        <name>Zn(2+)</name>
        <dbReference type="ChEBI" id="CHEBI:29105"/>
        <label>2</label>
    </ligand>
</feature>
<feature type="binding site" evidence="1">
    <location>
        <position position="135"/>
    </location>
    <ligand>
        <name>Zn(2+)</name>
        <dbReference type="ChEBI" id="CHEBI:29105"/>
        <label>2</label>
    </ligand>
</feature>
<feature type="binding site" evidence="1">
    <location>
        <position position="163"/>
    </location>
    <ligand>
        <name>Zn(2+)</name>
        <dbReference type="ChEBI" id="CHEBI:29105"/>
        <label>1</label>
    </ligand>
</feature>
<feature type="binding site" evidence="1">
    <location>
        <position position="349"/>
    </location>
    <ligand>
        <name>Zn(2+)</name>
        <dbReference type="ChEBI" id="CHEBI:29105"/>
        <label>2</label>
    </ligand>
</feature>
<name>DAPE_XANCB</name>
<gene>
    <name evidence="1" type="primary">dapE</name>
    <name type="ordered locus">xcc-b100_2910</name>
</gene>
<proteinExistence type="inferred from homology"/>
<keyword id="KW-0028">Amino-acid biosynthesis</keyword>
<keyword id="KW-0170">Cobalt</keyword>
<keyword id="KW-0220">Diaminopimelate biosynthesis</keyword>
<keyword id="KW-0378">Hydrolase</keyword>
<keyword id="KW-0457">Lysine biosynthesis</keyword>
<keyword id="KW-0479">Metal-binding</keyword>
<keyword id="KW-0862">Zinc</keyword>
<organism>
    <name type="scientific">Xanthomonas campestris pv. campestris (strain B100)</name>
    <dbReference type="NCBI Taxonomy" id="509169"/>
    <lineage>
        <taxon>Bacteria</taxon>
        <taxon>Pseudomonadati</taxon>
        <taxon>Pseudomonadota</taxon>
        <taxon>Gammaproteobacteria</taxon>
        <taxon>Lysobacterales</taxon>
        <taxon>Lysobacteraceae</taxon>
        <taxon>Xanthomonas</taxon>
    </lineage>
</organism>
<accession>B0RW53</accession>
<evidence type="ECO:0000255" key="1">
    <source>
        <dbReference type="HAMAP-Rule" id="MF_01690"/>
    </source>
</evidence>
<reference key="1">
    <citation type="journal article" date="2008" name="J. Biotechnol.">
        <title>The genome of Xanthomonas campestris pv. campestris B100 and its use for the reconstruction of metabolic pathways involved in xanthan biosynthesis.</title>
        <authorList>
            <person name="Vorhoelter F.-J."/>
            <person name="Schneiker S."/>
            <person name="Goesmann A."/>
            <person name="Krause L."/>
            <person name="Bekel T."/>
            <person name="Kaiser O."/>
            <person name="Linke B."/>
            <person name="Patschkowski T."/>
            <person name="Rueckert C."/>
            <person name="Schmid J."/>
            <person name="Sidhu V.K."/>
            <person name="Sieber V."/>
            <person name="Tauch A."/>
            <person name="Watt S.A."/>
            <person name="Weisshaar B."/>
            <person name="Becker A."/>
            <person name="Niehaus K."/>
            <person name="Puehler A."/>
        </authorList>
    </citation>
    <scope>NUCLEOTIDE SEQUENCE [LARGE SCALE GENOMIC DNA]</scope>
    <source>
        <strain>B100</strain>
    </source>
</reference>